<accession>B6JPQ9</accession>
<gene>
    <name type="ordered locus">HPP12_0160</name>
</gene>
<reference key="1">
    <citation type="submission" date="2008-10" db="EMBL/GenBank/DDBJ databases">
        <title>The complete genome sequence of Helicobacter pylori strain P12.</title>
        <authorList>
            <person name="Fischer W."/>
            <person name="Windhager L."/>
            <person name="Karnholz A."/>
            <person name="Zeiller M."/>
            <person name="Zimmer R."/>
            <person name="Haas R."/>
        </authorList>
    </citation>
    <scope>NUCLEOTIDE SEQUENCE [LARGE SCALE GENOMIC DNA]</scope>
    <source>
        <strain>P12</strain>
    </source>
</reference>
<keyword id="KW-0963">Cytoplasm</keyword>
<keyword id="KW-0238">DNA-binding</keyword>
<keyword id="KW-0804">Transcription</keyword>
<keyword id="KW-0805">Transcription regulation</keyword>
<dbReference type="EMBL" id="CP001217">
    <property type="protein sequence ID" value="ACJ07320.1"/>
    <property type="molecule type" value="Genomic_DNA"/>
</dbReference>
<dbReference type="SMR" id="B6JPQ9"/>
<dbReference type="KEGG" id="hpp:HPP12_0160"/>
<dbReference type="HOGENOM" id="CLU_062974_2_2_7"/>
<dbReference type="Proteomes" id="UP000008198">
    <property type="component" value="Chromosome"/>
</dbReference>
<dbReference type="GO" id="GO:0005829">
    <property type="term" value="C:cytosol"/>
    <property type="evidence" value="ECO:0007669"/>
    <property type="project" value="TreeGrafter"/>
</dbReference>
<dbReference type="GO" id="GO:0003677">
    <property type="term" value="F:DNA binding"/>
    <property type="evidence" value="ECO:0007669"/>
    <property type="project" value="UniProtKB-UniRule"/>
</dbReference>
<dbReference type="GO" id="GO:0006355">
    <property type="term" value="P:regulation of DNA-templated transcription"/>
    <property type="evidence" value="ECO:0007669"/>
    <property type="project" value="UniProtKB-UniRule"/>
</dbReference>
<dbReference type="FunFam" id="1.10.10.200:FF:000008">
    <property type="entry name" value="Probable transcriptional regulatory protein HP_0162"/>
    <property type="match status" value="1"/>
</dbReference>
<dbReference type="Gene3D" id="1.10.10.200">
    <property type="match status" value="1"/>
</dbReference>
<dbReference type="Gene3D" id="3.30.70.980">
    <property type="match status" value="2"/>
</dbReference>
<dbReference type="HAMAP" id="MF_00693">
    <property type="entry name" value="Transcrip_reg_TACO1"/>
    <property type="match status" value="1"/>
</dbReference>
<dbReference type="InterPro" id="IPR017856">
    <property type="entry name" value="Integrase-like_N"/>
</dbReference>
<dbReference type="InterPro" id="IPR048300">
    <property type="entry name" value="TACO1_YebC-like_2nd/3rd_dom"/>
</dbReference>
<dbReference type="InterPro" id="IPR049083">
    <property type="entry name" value="TACO1_YebC_N"/>
</dbReference>
<dbReference type="InterPro" id="IPR002876">
    <property type="entry name" value="Transcrip_reg_TACO1-like"/>
</dbReference>
<dbReference type="InterPro" id="IPR026564">
    <property type="entry name" value="Transcrip_reg_TACO1-like_dom3"/>
</dbReference>
<dbReference type="InterPro" id="IPR029072">
    <property type="entry name" value="YebC-like"/>
</dbReference>
<dbReference type="NCBIfam" id="NF009044">
    <property type="entry name" value="PRK12378.1"/>
    <property type="match status" value="1"/>
</dbReference>
<dbReference type="NCBIfam" id="TIGR01033">
    <property type="entry name" value="YebC/PmpR family DNA-binding transcriptional regulator"/>
    <property type="match status" value="1"/>
</dbReference>
<dbReference type="PANTHER" id="PTHR12532:SF6">
    <property type="entry name" value="TRANSCRIPTIONAL REGULATORY PROTEIN YEBC-RELATED"/>
    <property type="match status" value="1"/>
</dbReference>
<dbReference type="PANTHER" id="PTHR12532">
    <property type="entry name" value="TRANSLATIONAL ACTIVATOR OF CYTOCHROME C OXIDASE 1"/>
    <property type="match status" value="1"/>
</dbReference>
<dbReference type="Pfam" id="PF20772">
    <property type="entry name" value="TACO1_YebC_N"/>
    <property type="match status" value="1"/>
</dbReference>
<dbReference type="Pfam" id="PF01709">
    <property type="entry name" value="Transcrip_reg"/>
    <property type="match status" value="1"/>
</dbReference>
<dbReference type="SUPFAM" id="SSF75625">
    <property type="entry name" value="YebC-like"/>
    <property type="match status" value="1"/>
</dbReference>
<protein>
    <recommendedName>
        <fullName evidence="1">Probable transcriptional regulatory protein HPP12_0160</fullName>
    </recommendedName>
</protein>
<proteinExistence type="inferred from homology"/>
<comment type="subcellular location">
    <subcellularLocation>
        <location evidence="1">Cytoplasm</location>
    </subcellularLocation>
</comment>
<comment type="similarity">
    <text evidence="1">Belongs to the TACO1 family.</text>
</comment>
<sequence length="240" mass="26999">MGRAFEYRRAAKEKRWDKMSKVFPKLAKAITLAAKDGGSEPDTNAKLRTAILNAKAQNMPKDNIDAAIKRASSKEGNLSEITYEGKANFGVLIIMECMTDNPTRTIANLKSYFNKTQGASIVPNGSLEFMFNRKSVFECSKSEVKNLKLSLEDLEFALIDYGLEELEEVGDRIIIRGDYNSFKLLNEGFESLKLPILKAGLQRIATTPIELNDEQMELTEKLLDRIEDDDDVVALYTNIE</sequence>
<organism>
    <name type="scientific">Helicobacter pylori (strain P12)</name>
    <dbReference type="NCBI Taxonomy" id="570508"/>
    <lineage>
        <taxon>Bacteria</taxon>
        <taxon>Pseudomonadati</taxon>
        <taxon>Campylobacterota</taxon>
        <taxon>Epsilonproteobacteria</taxon>
        <taxon>Campylobacterales</taxon>
        <taxon>Helicobacteraceae</taxon>
        <taxon>Helicobacter</taxon>
    </lineage>
</organism>
<evidence type="ECO:0000255" key="1">
    <source>
        <dbReference type="HAMAP-Rule" id="MF_00693"/>
    </source>
</evidence>
<name>Y160_HELP2</name>
<feature type="chain" id="PRO_1000132200" description="Probable transcriptional regulatory protein HPP12_0160">
    <location>
        <begin position="1"/>
        <end position="240"/>
    </location>
</feature>